<proteinExistence type="inferred from homology"/>
<name>AROK_LEPBA</name>
<organism>
    <name type="scientific">Leptospira biflexa serovar Patoc (strain Patoc 1 / Ames)</name>
    <dbReference type="NCBI Taxonomy" id="355278"/>
    <lineage>
        <taxon>Bacteria</taxon>
        <taxon>Pseudomonadati</taxon>
        <taxon>Spirochaetota</taxon>
        <taxon>Spirochaetia</taxon>
        <taxon>Leptospirales</taxon>
        <taxon>Leptospiraceae</taxon>
        <taxon>Leptospira</taxon>
    </lineage>
</organism>
<accession>B0SI62</accession>
<evidence type="ECO:0000255" key="1">
    <source>
        <dbReference type="HAMAP-Rule" id="MF_00109"/>
    </source>
</evidence>
<gene>
    <name evidence="1" type="primary">aroK</name>
    <name type="ordered locus">LBF_4071</name>
</gene>
<keyword id="KW-0028">Amino-acid biosynthesis</keyword>
<keyword id="KW-0057">Aromatic amino acid biosynthesis</keyword>
<keyword id="KW-0067">ATP-binding</keyword>
<keyword id="KW-0963">Cytoplasm</keyword>
<keyword id="KW-0418">Kinase</keyword>
<keyword id="KW-0460">Magnesium</keyword>
<keyword id="KW-0479">Metal-binding</keyword>
<keyword id="KW-0547">Nucleotide-binding</keyword>
<keyword id="KW-0808">Transferase</keyword>
<reference key="1">
    <citation type="journal article" date="2008" name="PLoS ONE">
        <title>Genome sequence of the saprophyte Leptospira biflexa provides insights into the evolution of Leptospira and the pathogenesis of leptospirosis.</title>
        <authorList>
            <person name="Picardeau M."/>
            <person name="Bulach D.M."/>
            <person name="Bouchier C."/>
            <person name="Zuerner R.L."/>
            <person name="Zidane N."/>
            <person name="Wilson P.J."/>
            <person name="Creno S."/>
            <person name="Kuczek E.S."/>
            <person name="Bommezzadri S."/>
            <person name="Davis J.C."/>
            <person name="McGrath A."/>
            <person name="Johnson M.J."/>
            <person name="Boursaux-Eude C."/>
            <person name="Seemann T."/>
            <person name="Rouy Z."/>
            <person name="Coppel R.L."/>
            <person name="Rood J.I."/>
            <person name="Lajus A."/>
            <person name="Davies J.K."/>
            <person name="Medigue C."/>
            <person name="Adler B."/>
        </authorList>
    </citation>
    <scope>NUCLEOTIDE SEQUENCE [LARGE SCALE GENOMIC DNA]</scope>
    <source>
        <strain>Patoc 1 / Ames</strain>
    </source>
</reference>
<dbReference type="EC" id="2.7.1.71" evidence="1"/>
<dbReference type="EMBL" id="CP000778">
    <property type="protein sequence ID" value="ABZ95896.1"/>
    <property type="molecule type" value="Genomic_DNA"/>
</dbReference>
<dbReference type="RefSeq" id="WP_012476548.1">
    <property type="nucleotide sequence ID" value="NC_010845.1"/>
</dbReference>
<dbReference type="SMR" id="B0SI62"/>
<dbReference type="KEGG" id="lbf:LBF_4071"/>
<dbReference type="HOGENOM" id="CLU_057607_4_1_12"/>
<dbReference type="UniPathway" id="UPA00053">
    <property type="reaction ID" value="UER00088"/>
</dbReference>
<dbReference type="GO" id="GO:0005829">
    <property type="term" value="C:cytosol"/>
    <property type="evidence" value="ECO:0007669"/>
    <property type="project" value="TreeGrafter"/>
</dbReference>
<dbReference type="GO" id="GO:0005524">
    <property type="term" value="F:ATP binding"/>
    <property type="evidence" value="ECO:0007669"/>
    <property type="project" value="UniProtKB-UniRule"/>
</dbReference>
<dbReference type="GO" id="GO:0000287">
    <property type="term" value="F:magnesium ion binding"/>
    <property type="evidence" value="ECO:0007669"/>
    <property type="project" value="UniProtKB-UniRule"/>
</dbReference>
<dbReference type="GO" id="GO:0004765">
    <property type="term" value="F:shikimate kinase activity"/>
    <property type="evidence" value="ECO:0007669"/>
    <property type="project" value="UniProtKB-UniRule"/>
</dbReference>
<dbReference type="GO" id="GO:0008652">
    <property type="term" value="P:amino acid biosynthetic process"/>
    <property type="evidence" value="ECO:0007669"/>
    <property type="project" value="UniProtKB-KW"/>
</dbReference>
<dbReference type="GO" id="GO:0009073">
    <property type="term" value="P:aromatic amino acid family biosynthetic process"/>
    <property type="evidence" value="ECO:0007669"/>
    <property type="project" value="UniProtKB-KW"/>
</dbReference>
<dbReference type="GO" id="GO:0009423">
    <property type="term" value="P:chorismate biosynthetic process"/>
    <property type="evidence" value="ECO:0007669"/>
    <property type="project" value="UniProtKB-UniRule"/>
</dbReference>
<dbReference type="CDD" id="cd00464">
    <property type="entry name" value="SK"/>
    <property type="match status" value="1"/>
</dbReference>
<dbReference type="Gene3D" id="3.40.50.300">
    <property type="entry name" value="P-loop containing nucleotide triphosphate hydrolases"/>
    <property type="match status" value="1"/>
</dbReference>
<dbReference type="HAMAP" id="MF_00109">
    <property type="entry name" value="Shikimate_kinase"/>
    <property type="match status" value="1"/>
</dbReference>
<dbReference type="InterPro" id="IPR027417">
    <property type="entry name" value="P-loop_NTPase"/>
</dbReference>
<dbReference type="InterPro" id="IPR031322">
    <property type="entry name" value="Shikimate/glucono_kinase"/>
</dbReference>
<dbReference type="InterPro" id="IPR000623">
    <property type="entry name" value="Shikimate_kinase/TSH1"/>
</dbReference>
<dbReference type="PANTHER" id="PTHR21087">
    <property type="entry name" value="SHIKIMATE KINASE"/>
    <property type="match status" value="1"/>
</dbReference>
<dbReference type="PANTHER" id="PTHR21087:SF16">
    <property type="entry name" value="SHIKIMATE KINASE 1, CHLOROPLASTIC"/>
    <property type="match status" value="1"/>
</dbReference>
<dbReference type="Pfam" id="PF01202">
    <property type="entry name" value="SKI"/>
    <property type="match status" value="1"/>
</dbReference>
<dbReference type="PRINTS" id="PR01100">
    <property type="entry name" value="SHIKIMTKNASE"/>
</dbReference>
<dbReference type="SUPFAM" id="SSF52540">
    <property type="entry name" value="P-loop containing nucleoside triphosphate hydrolases"/>
    <property type="match status" value="1"/>
</dbReference>
<comment type="function">
    <text evidence="1">Catalyzes the specific phosphorylation of the 3-hydroxyl group of shikimic acid using ATP as a cosubstrate.</text>
</comment>
<comment type="catalytic activity">
    <reaction evidence="1">
        <text>shikimate + ATP = 3-phosphoshikimate + ADP + H(+)</text>
        <dbReference type="Rhea" id="RHEA:13121"/>
        <dbReference type="ChEBI" id="CHEBI:15378"/>
        <dbReference type="ChEBI" id="CHEBI:30616"/>
        <dbReference type="ChEBI" id="CHEBI:36208"/>
        <dbReference type="ChEBI" id="CHEBI:145989"/>
        <dbReference type="ChEBI" id="CHEBI:456216"/>
        <dbReference type="EC" id="2.7.1.71"/>
    </reaction>
</comment>
<comment type="cofactor">
    <cofactor evidence="1">
        <name>Mg(2+)</name>
        <dbReference type="ChEBI" id="CHEBI:18420"/>
    </cofactor>
    <text evidence="1">Binds 1 Mg(2+) ion per subunit.</text>
</comment>
<comment type="pathway">
    <text evidence="1">Metabolic intermediate biosynthesis; chorismate biosynthesis; chorismate from D-erythrose 4-phosphate and phosphoenolpyruvate: step 5/7.</text>
</comment>
<comment type="subunit">
    <text evidence="1">Monomer.</text>
</comment>
<comment type="subcellular location">
    <subcellularLocation>
        <location evidence="1">Cytoplasm</location>
    </subcellularLocation>
</comment>
<comment type="similarity">
    <text evidence="1">Belongs to the shikimate kinase family.</text>
</comment>
<sequence length="181" mass="20233">MMNIILIGARGAGKSKVSRSLSKQSEIPVVSTDSVAVYETGGIPIPKFVENNGWKAFRELEYSILQKLQNANGIILDCGGGILFDLDESGNEVLSERKLDLLRKIGRIVYLERGIEELVEKVKGDKTRPDLSKITTYRSILEKRLPVYQEAAHFKLNLTKLSKEEAAEKILDWIGIKSKSI</sequence>
<feature type="chain" id="PRO_1000094395" description="Shikimate kinase">
    <location>
        <begin position="1"/>
        <end position="181"/>
    </location>
</feature>
<feature type="binding site" evidence="1">
    <location>
        <begin position="11"/>
        <end position="16"/>
    </location>
    <ligand>
        <name>ATP</name>
        <dbReference type="ChEBI" id="CHEBI:30616"/>
    </ligand>
</feature>
<feature type="binding site" evidence="1">
    <location>
        <position position="15"/>
    </location>
    <ligand>
        <name>Mg(2+)</name>
        <dbReference type="ChEBI" id="CHEBI:18420"/>
    </ligand>
</feature>
<feature type="binding site" evidence="1">
    <location>
        <position position="33"/>
    </location>
    <ligand>
        <name>substrate</name>
    </ligand>
</feature>
<feature type="binding site" evidence="1">
    <location>
        <position position="58"/>
    </location>
    <ligand>
        <name>substrate</name>
    </ligand>
</feature>
<feature type="binding site" evidence="1">
    <location>
        <position position="80"/>
    </location>
    <ligand>
        <name>substrate</name>
    </ligand>
</feature>
<feature type="binding site" evidence="1">
    <location>
        <position position="128"/>
    </location>
    <ligand>
        <name>ATP</name>
        <dbReference type="ChEBI" id="CHEBI:30616"/>
    </ligand>
</feature>
<feature type="binding site" evidence="1">
    <location>
        <position position="144"/>
    </location>
    <ligand>
        <name>substrate</name>
    </ligand>
</feature>
<protein>
    <recommendedName>
        <fullName evidence="1">Shikimate kinase</fullName>
        <shortName evidence="1">SK</shortName>
        <ecNumber evidence="1">2.7.1.71</ecNumber>
    </recommendedName>
</protein>